<organism>
    <name type="scientific">Desulfitobacterium hafniense (strain Y51)</name>
    <dbReference type="NCBI Taxonomy" id="138119"/>
    <lineage>
        <taxon>Bacteria</taxon>
        <taxon>Bacillati</taxon>
        <taxon>Bacillota</taxon>
        <taxon>Clostridia</taxon>
        <taxon>Eubacteriales</taxon>
        <taxon>Desulfitobacteriaceae</taxon>
        <taxon>Desulfitobacterium</taxon>
    </lineage>
</organism>
<comment type="function">
    <text evidence="1">Component of the acetyl coenzyme A carboxylase (ACC) complex. Biotin carboxylase (BC) catalyzes the carboxylation of biotin on its carrier protein (BCCP) and then the CO(2) group is transferred by the transcarboxylase to acetyl-CoA to form malonyl-CoA.</text>
</comment>
<comment type="catalytic activity">
    <reaction evidence="1">
        <text>N(6)-carboxybiotinyl-L-lysyl-[protein] + acetyl-CoA = N(6)-biotinyl-L-lysyl-[protein] + malonyl-CoA</text>
        <dbReference type="Rhea" id="RHEA:54728"/>
        <dbReference type="Rhea" id="RHEA-COMP:10505"/>
        <dbReference type="Rhea" id="RHEA-COMP:10506"/>
        <dbReference type="ChEBI" id="CHEBI:57288"/>
        <dbReference type="ChEBI" id="CHEBI:57384"/>
        <dbReference type="ChEBI" id="CHEBI:83144"/>
        <dbReference type="ChEBI" id="CHEBI:83145"/>
        <dbReference type="EC" id="2.1.3.15"/>
    </reaction>
</comment>
<comment type="cofactor">
    <cofactor evidence="1">
        <name>Zn(2+)</name>
        <dbReference type="ChEBI" id="CHEBI:29105"/>
    </cofactor>
    <text evidence="1">Binds 1 zinc ion per subunit.</text>
</comment>
<comment type="pathway">
    <text evidence="1">Lipid metabolism; malonyl-CoA biosynthesis; malonyl-CoA from acetyl-CoA: step 1/1.</text>
</comment>
<comment type="subunit">
    <text evidence="1">Acetyl-CoA carboxylase is a heterohexamer composed of biotin carboxyl carrier protein (AccB), biotin carboxylase (AccC) and two subunits each of ACCase subunit alpha (AccA) and ACCase subunit beta (AccD).</text>
</comment>
<comment type="subcellular location">
    <subcellularLocation>
        <location evidence="1">Cytoplasm</location>
    </subcellularLocation>
</comment>
<comment type="similarity">
    <text evidence="1">Belongs to the AccD/PCCB family.</text>
</comment>
<reference key="1">
    <citation type="journal article" date="2006" name="J. Bacteriol.">
        <title>Complete genome sequence of the dehalorespiring bacterium Desulfitobacterium hafniense Y51 and comparison with Dehalococcoides ethenogenes 195.</title>
        <authorList>
            <person name="Nonaka H."/>
            <person name="Keresztes G."/>
            <person name="Shinoda Y."/>
            <person name="Ikenaga Y."/>
            <person name="Abe M."/>
            <person name="Naito K."/>
            <person name="Inatomi K."/>
            <person name="Furukawa K."/>
            <person name="Inui M."/>
            <person name="Yukawa H."/>
        </authorList>
    </citation>
    <scope>NUCLEOTIDE SEQUENCE [LARGE SCALE GENOMIC DNA]</scope>
    <source>
        <strain>Y51</strain>
    </source>
</reference>
<feature type="chain" id="PRO_0000389732" description="Acetyl-coenzyme A carboxylase carboxyl transferase subunit beta">
    <location>
        <begin position="1"/>
        <end position="304"/>
    </location>
</feature>
<feature type="domain" description="CoA carboxyltransferase N-terminal" evidence="2">
    <location>
        <begin position="48"/>
        <end position="304"/>
    </location>
</feature>
<feature type="zinc finger region" description="C4-type" evidence="1">
    <location>
        <begin position="52"/>
        <end position="74"/>
    </location>
</feature>
<feature type="region of interest" description="Disordered" evidence="3">
    <location>
        <begin position="16"/>
        <end position="42"/>
    </location>
</feature>
<feature type="binding site" evidence="1">
    <location>
        <position position="52"/>
    </location>
    <ligand>
        <name>Zn(2+)</name>
        <dbReference type="ChEBI" id="CHEBI:29105"/>
    </ligand>
</feature>
<feature type="binding site" evidence="1">
    <location>
        <position position="55"/>
    </location>
    <ligand>
        <name>Zn(2+)</name>
        <dbReference type="ChEBI" id="CHEBI:29105"/>
    </ligand>
</feature>
<feature type="binding site" evidence="1">
    <location>
        <position position="71"/>
    </location>
    <ligand>
        <name>Zn(2+)</name>
        <dbReference type="ChEBI" id="CHEBI:29105"/>
    </ligand>
</feature>
<feature type="binding site" evidence="1">
    <location>
        <position position="74"/>
    </location>
    <ligand>
        <name>Zn(2+)</name>
        <dbReference type="ChEBI" id="CHEBI:29105"/>
    </ligand>
</feature>
<gene>
    <name evidence="1" type="primary">accD</name>
    <name type="ordered locus">DSY1315</name>
</gene>
<evidence type="ECO:0000255" key="1">
    <source>
        <dbReference type="HAMAP-Rule" id="MF_01395"/>
    </source>
</evidence>
<evidence type="ECO:0000255" key="2">
    <source>
        <dbReference type="PROSITE-ProRule" id="PRU01136"/>
    </source>
</evidence>
<evidence type="ECO:0000256" key="3">
    <source>
        <dbReference type="SAM" id="MobiDB-lite"/>
    </source>
</evidence>
<dbReference type="EC" id="2.1.3.15" evidence="1"/>
<dbReference type="EMBL" id="AP008230">
    <property type="protein sequence ID" value="BAE83104.1"/>
    <property type="molecule type" value="Genomic_DNA"/>
</dbReference>
<dbReference type="RefSeq" id="WP_005814657.1">
    <property type="nucleotide sequence ID" value="NC_007907.1"/>
</dbReference>
<dbReference type="SMR" id="Q24XY8"/>
<dbReference type="STRING" id="138119.DSY1315"/>
<dbReference type="KEGG" id="dsy:DSY1315"/>
<dbReference type="eggNOG" id="COG0777">
    <property type="taxonomic scope" value="Bacteria"/>
</dbReference>
<dbReference type="HOGENOM" id="CLU_015486_1_1_9"/>
<dbReference type="UniPathway" id="UPA00655">
    <property type="reaction ID" value="UER00711"/>
</dbReference>
<dbReference type="Proteomes" id="UP000001946">
    <property type="component" value="Chromosome"/>
</dbReference>
<dbReference type="GO" id="GO:0009317">
    <property type="term" value="C:acetyl-CoA carboxylase complex"/>
    <property type="evidence" value="ECO:0007669"/>
    <property type="project" value="InterPro"/>
</dbReference>
<dbReference type="GO" id="GO:0003989">
    <property type="term" value="F:acetyl-CoA carboxylase activity"/>
    <property type="evidence" value="ECO:0007669"/>
    <property type="project" value="InterPro"/>
</dbReference>
<dbReference type="GO" id="GO:0005524">
    <property type="term" value="F:ATP binding"/>
    <property type="evidence" value="ECO:0007669"/>
    <property type="project" value="UniProtKB-KW"/>
</dbReference>
<dbReference type="GO" id="GO:0016743">
    <property type="term" value="F:carboxyl- or carbamoyltransferase activity"/>
    <property type="evidence" value="ECO:0007669"/>
    <property type="project" value="UniProtKB-UniRule"/>
</dbReference>
<dbReference type="GO" id="GO:0008270">
    <property type="term" value="F:zinc ion binding"/>
    <property type="evidence" value="ECO:0007669"/>
    <property type="project" value="UniProtKB-UniRule"/>
</dbReference>
<dbReference type="GO" id="GO:0006633">
    <property type="term" value="P:fatty acid biosynthetic process"/>
    <property type="evidence" value="ECO:0007669"/>
    <property type="project" value="UniProtKB-KW"/>
</dbReference>
<dbReference type="GO" id="GO:2001295">
    <property type="term" value="P:malonyl-CoA biosynthetic process"/>
    <property type="evidence" value="ECO:0007669"/>
    <property type="project" value="UniProtKB-UniRule"/>
</dbReference>
<dbReference type="Gene3D" id="3.90.226.10">
    <property type="entry name" value="2-enoyl-CoA Hydratase, Chain A, domain 1"/>
    <property type="match status" value="1"/>
</dbReference>
<dbReference type="HAMAP" id="MF_01395">
    <property type="entry name" value="AcetylCoA_CT_beta"/>
    <property type="match status" value="1"/>
</dbReference>
<dbReference type="InterPro" id="IPR034733">
    <property type="entry name" value="AcCoA_carboxyl_beta"/>
</dbReference>
<dbReference type="InterPro" id="IPR000438">
    <property type="entry name" value="Acetyl_CoA_COase_Trfase_b_su"/>
</dbReference>
<dbReference type="InterPro" id="IPR029045">
    <property type="entry name" value="ClpP/crotonase-like_dom_sf"/>
</dbReference>
<dbReference type="InterPro" id="IPR011762">
    <property type="entry name" value="COA_CT_N"/>
</dbReference>
<dbReference type="InterPro" id="IPR041010">
    <property type="entry name" value="Znf-ACC"/>
</dbReference>
<dbReference type="NCBIfam" id="TIGR00515">
    <property type="entry name" value="accD"/>
    <property type="match status" value="1"/>
</dbReference>
<dbReference type="PANTHER" id="PTHR42995">
    <property type="entry name" value="ACETYL-COENZYME A CARBOXYLASE CARBOXYL TRANSFERASE SUBUNIT BETA, CHLOROPLASTIC"/>
    <property type="match status" value="1"/>
</dbReference>
<dbReference type="PANTHER" id="PTHR42995:SF5">
    <property type="entry name" value="ACETYL-COENZYME A CARBOXYLASE CARBOXYL TRANSFERASE SUBUNIT BETA, CHLOROPLASTIC"/>
    <property type="match status" value="1"/>
</dbReference>
<dbReference type="Pfam" id="PF01039">
    <property type="entry name" value="Carboxyl_trans"/>
    <property type="match status" value="1"/>
</dbReference>
<dbReference type="Pfam" id="PF17848">
    <property type="entry name" value="Zn_ribbon_ACC"/>
    <property type="match status" value="1"/>
</dbReference>
<dbReference type="PRINTS" id="PR01070">
    <property type="entry name" value="ACCCTRFRASEB"/>
</dbReference>
<dbReference type="SUPFAM" id="SSF52096">
    <property type="entry name" value="ClpP/crotonase"/>
    <property type="match status" value="1"/>
</dbReference>
<dbReference type="PROSITE" id="PS50980">
    <property type="entry name" value="COA_CT_NTER"/>
    <property type="match status" value="1"/>
</dbReference>
<sequence>MLKDIFRKKRKYATLSSLPPKNSEGGLAYFDEPSPEQESTRKELPDGLWVKCPKCGEALFNKDLVENQRVCLTCSYHFRIPARERLEHLVDPGSFAEWDRELQTTNPLSFPDYEEKLAEAYQKSDVSESVLTGQASIEGMPVVLAFNEGNFMMGSMGSVTGEKITRAIERAIELRCPVIIFSTSGGARMQEGILSLYQMAKTSAALGRLAEEGLLYISVLTDPTFGGVTASYASLGDIHIAEPGALIGFTGPRVIKQTMRKELPEGAQTAEFNQSHGQIDCVVERAEMRKVLGRLLRYHQEGAV</sequence>
<keyword id="KW-0067">ATP-binding</keyword>
<keyword id="KW-0963">Cytoplasm</keyword>
<keyword id="KW-0275">Fatty acid biosynthesis</keyword>
<keyword id="KW-0276">Fatty acid metabolism</keyword>
<keyword id="KW-0444">Lipid biosynthesis</keyword>
<keyword id="KW-0443">Lipid metabolism</keyword>
<keyword id="KW-0479">Metal-binding</keyword>
<keyword id="KW-0547">Nucleotide-binding</keyword>
<keyword id="KW-1185">Reference proteome</keyword>
<keyword id="KW-0808">Transferase</keyword>
<keyword id="KW-0862">Zinc</keyword>
<keyword id="KW-0863">Zinc-finger</keyword>
<name>ACCD_DESHY</name>
<protein>
    <recommendedName>
        <fullName evidence="1">Acetyl-coenzyme A carboxylase carboxyl transferase subunit beta</fullName>
        <shortName evidence="1">ACCase subunit beta</shortName>
        <shortName evidence="1">Acetyl-CoA carboxylase carboxyltransferase subunit beta</shortName>
        <ecNumber evidence="1">2.1.3.15</ecNumber>
    </recommendedName>
</protein>
<accession>Q24XY8</accession>
<proteinExistence type="inferred from homology"/>